<proteinExistence type="inferred from homology"/>
<comment type="function">
    <text evidence="1">Responsible for channeling the electrons from the oxidation of dihydroorotate from the FMN redox center in the PyrD type B subunit to the ultimate electron acceptor NAD(+).</text>
</comment>
<comment type="cofactor">
    <cofactor evidence="1">
        <name>[2Fe-2S] cluster</name>
        <dbReference type="ChEBI" id="CHEBI:190135"/>
    </cofactor>
    <text evidence="1">Binds 1 [2Fe-2S] cluster per subunit.</text>
</comment>
<comment type="cofactor">
    <cofactor evidence="1">
        <name>FAD</name>
        <dbReference type="ChEBI" id="CHEBI:57692"/>
    </cofactor>
    <text evidence="1">Binds 1 FAD per subunit.</text>
</comment>
<comment type="pathway">
    <text evidence="1">Pyrimidine metabolism; UMP biosynthesis via de novo pathway; orotate from (S)-dihydroorotate (NAD(+) route): step 1/1.</text>
</comment>
<comment type="subunit">
    <text evidence="1">Heterotetramer of 2 PyrK and 2 PyrD type B subunits.</text>
</comment>
<comment type="similarity">
    <text evidence="1">Belongs to the PyrK family.</text>
</comment>
<accession>Q92AH4</accession>
<keyword id="KW-0001">2Fe-2S</keyword>
<keyword id="KW-0249">Electron transport</keyword>
<keyword id="KW-0274">FAD</keyword>
<keyword id="KW-0285">Flavoprotein</keyword>
<keyword id="KW-0408">Iron</keyword>
<keyword id="KW-0411">Iron-sulfur</keyword>
<keyword id="KW-0479">Metal-binding</keyword>
<keyword id="KW-0665">Pyrimidine biosynthesis</keyword>
<keyword id="KW-0813">Transport</keyword>
<gene>
    <name evidence="1" type="primary">pyrK</name>
    <name type="synonym">pyrDII</name>
    <name type="ordered locus">lin1948</name>
</gene>
<organism>
    <name type="scientific">Listeria innocua serovar 6a (strain ATCC BAA-680 / CLIP 11262)</name>
    <dbReference type="NCBI Taxonomy" id="272626"/>
    <lineage>
        <taxon>Bacteria</taxon>
        <taxon>Bacillati</taxon>
        <taxon>Bacillota</taxon>
        <taxon>Bacilli</taxon>
        <taxon>Bacillales</taxon>
        <taxon>Listeriaceae</taxon>
        <taxon>Listeria</taxon>
    </lineage>
</organism>
<feature type="chain" id="PRO_0000148364" description="Dihydroorotate dehydrogenase B (NAD(+)), electron transfer subunit">
    <location>
        <begin position="1"/>
        <end position="254"/>
    </location>
</feature>
<feature type="domain" description="FAD-binding FR-type" evidence="1">
    <location>
        <begin position="1"/>
        <end position="99"/>
    </location>
</feature>
<feature type="binding site" evidence="1">
    <location>
        <begin position="50"/>
        <end position="53"/>
    </location>
    <ligand>
        <name>FAD</name>
        <dbReference type="ChEBI" id="CHEBI:57692"/>
    </ligand>
</feature>
<feature type="binding site" evidence="1">
    <location>
        <begin position="67"/>
        <end position="69"/>
    </location>
    <ligand>
        <name>FAD</name>
        <dbReference type="ChEBI" id="CHEBI:57692"/>
    </ligand>
</feature>
<feature type="binding site" evidence="1">
    <location>
        <begin position="74"/>
        <end position="75"/>
    </location>
    <ligand>
        <name>FAD</name>
        <dbReference type="ChEBI" id="CHEBI:57692"/>
    </ligand>
</feature>
<feature type="binding site" evidence="1">
    <location>
        <position position="218"/>
    </location>
    <ligand>
        <name>[2Fe-2S] cluster</name>
        <dbReference type="ChEBI" id="CHEBI:190135"/>
    </ligand>
</feature>
<feature type="binding site" evidence="1">
    <location>
        <position position="223"/>
    </location>
    <ligand>
        <name>[2Fe-2S] cluster</name>
        <dbReference type="ChEBI" id="CHEBI:190135"/>
    </ligand>
</feature>
<feature type="binding site" evidence="1">
    <location>
        <position position="226"/>
    </location>
    <ligand>
        <name>[2Fe-2S] cluster</name>
        <dbReference type="ChEBI" id="CHEBI:190135"/>
    </ligand>
</feature>
<feature type="binding site" evidence="1">
    <location>
        <position position="241"/>
    </location>
    <ligand>
        <name>[2Fe-2S] cluster</name>
        <dbReference type="ChEBI" id="CHEBI:190135"/>
    </ligand>
</feature>
<evidence type="ECO:0000255" key="1">
    <source>
        <dbReference type="HAMAP-Rule" id="MF_01211"/>
    </source>
</evidence>
<protein>
    <recommendedName>
        <fullName evidence="1">Dihydroorotate dehydrogenase B (NAD(+)), electron transfer subunit</fullName>
    </recommendedName>
    <alternativeName>
        <fullName evidence="1">Dihydroorotate oxidase B, electron transfer subunit</fullName>
    </alternativeName>
</protein>
<reference key="1">
    <citation type="journal article" date="2001" name="Science">
        <title>Comparative genomics of Listeria species.</title>
        <authorList>
            <person name="Glaser P."/>
            <person name="Frangeul L."/>
            <person name="Buchrieser C."/>
            <person name="Rusniok C."/>
            <person name="Amend A."/>
            <person name="Baquero F."/>
            <person name="Berche P."/>
            <person name="Bloecker H."/>
            <person name="Brandt P."/>
            <person name="Chakraborty T."/>
            <person name="Charbit A."/>
            <person name="Chetouani F."/>
            <person name="Couve E."/>
            <person name="de Daruvar A."/>
            <person name="Dehoux P."/>
            <person name="Domann E."/>
            <person name="Dominguez-Bernal G."/>
            <person name="Duchaud E."/>
            <person name="Durant L."/>
            <person name="Dussurget O."/>
            <person name="Entian K.-D."/>
            <person name="Fsihi H."/>
            <person name="Garcia-del Portillo F."/>
            <person name="Garrido P."/>
            <person name="Gautier L."/>
            <person name="Goebel W."/>
            <person name="Gomez-Lopez N."/>
            <person name="Hain T."/>
            <person name="Hauf J."/>
            <person name="Jackson D."/>
            <person name="Jones L.-M."/>
            <person name="Kaerst U."/>
            <person name="Kreft J."/>
            <person name="Kuhn M."/>
            <person name="Kunst F."/>
            <person name="Kurapkat G."/>
            <person name="Madueno E."/>
            <person name="Maitournam A."/>
            <person name="Mata Vicente J."/>
            <person name="Ng E."/>
            <person name="Nedjari H."/>
            <person name="Nordsiek G."/>
            <person name="Novella S."/>
            <person name="de Pablos B."/>
            <person name="Perez-Diaz J.-C."/>
            <person name="Purcell R."/>
            <person name="Remmel B."/>
            <person name="Rose M."/>
            <person name="Schlueter T."/>
            <person name="Simoes N."/>
            <person name="Tierrez A."/>
            <person name="Vazquez-Boland J.-A."/>
            <person name="Voss H."/>
            <person name="Wehland J."/>
            <person name="Cossart P."/>
        </authorList>
    </citation>
    <scope>NUCLEOTIDE SEQUENCE [LARGE SCALE GENOMIC DNA]</scope>
    <source>
        <strain>ATCC BAA-680 / CLIP 11262</strain>
    </source>
</reference>
<name>PYRK_LISIN</name>
<dbReference type="EMBL" id="AL596170">
    <property type="protein sequence ID" value="CAC97178.1"/>
    <property type="molecule type" value="Genomic_DNA"/>
</dbReference>
<dbReference type="PIR" id="AB1676">
    <property type="entry name" value="AB1676"/>
</dbReference>
<dbReference type="SMR" id="Q92AH4"/>
<dbReference type="STRING" id="272626.gene:17566306"/>
<dbReference type="KEGG" id="lin:pyrDII"/>
<dbReference type="eggNOG" id="COG0543">
    <property type="taxonomic scope" value="Bacteria"/>
</dbReference>
<dbReference type="HOGENOM" id="CLU_003827_1_2_9"/>
<dbReference type="OrthoDB" id="9778346at2"/>
<dbReference type="UniPathway" id="UPA00070">
    <property type="reaction ID" value="UER00945"/>
</dbReference>
<dbReference type="Proteomes" id="UP000002513">
    <property type="component" value="Chromosome"/>
</dbReference>
<dbReference type="GO" id="GO:0051537">
    <property type="term" value="F:2 iron, 2 sulfur cluster binding"/>
    <property type="evidence" value="ECO:0007669"/>
    <property type="project" value="UniProtKB-KW"/>
</dbReference>
<dbReference type="GO" id="GO:0009055">
    <property type="term" value="F:electron transfer activity"/>
    <property type="evidence" value="ECO:0007669"/>
    <property type="project" value="UniProtKB-UniRule"/>
</dbReference>
<dbReference type="GO" id="GO:0050660">
    <property type="term" value="F:flavin adenine dinucleotide binding"/>
    <property type="evidence" value="ECO:0007669"/>
    <property type="project" value="InterPro"/>
</dbReference>
<dbReference type="GO" id="GO:0046872">
    <property type="term" value="F:metal ion binding"/>
    <property type="evidence" value="ECO:0007669"/>
    <property type="project" value="UniProtKB-KW"/>
</dbReference>
<dbReference type="GO" id="GO:0016491">
    <property type="term" value="F:oxidoreductase activity"/>
    <property type="evidence" value="ECO:0007669"/>
    <property type="project" value="InterPro"/>
</dbReference>
<dbReference type="GO" id="GO:0044205">
    <property type="term" value="P:'de novo' UMP biosynthetic process"/>
    <property type="evidence" value="ECO:0007669"/>
    <property type="project" value="UniProtKB-UniRule"/>
</dbReference>
<dbReference type="CDD" id="cd06218">
    <property type="entry name" value="DHOD_e_trans"/>
    <property type="match status" value="1"/>
</dbReference>
<dbReference type="FunFam" id="2.10.240.10:FF:000001">
    <property type="entry name" value="Dihydroorotate dehydrogenase B (NAD(+)), electron transfer subunit"/>
    <property type="match status" value="1"/>
</dbReference>
<dbReference type="FunFam" id="2.40.30.10:FF:000045">
    <property type="entry name" value="Dihydroorotate dehydrogenase B (NAD(+)), electron transfer subunit"/>
    <property type="match status" value="1"/>
</dbReference>
<dbReference type="FunFam" id="3.40.50.80:FF:000017">
    <property type="entry name" value="Dihydroorotate dehydrogenase B (NAD(+)), electron transfer subunit"/>
    <property type="match status" value="1"/>
</dbReference>
<dbReference type="Gene3D" id="2.10.240.10">
    <property type="entry name" value="Dihydroorotate dehydrogenase, electron transfer subunit"/>
    <property type="match status" value="1"/>
</dbReference>
<dbReference type="Gene3D" id="3.40.50.80">
    <property type="entry name" value="Nucleotide-binding domain of ferredoxin-NADP reductase (FNR) module"/>
    <property type="match status" value="1"/>
</dbReference>
<dbReference type="Gene3D" id="2.40.30.10">
    <property type="entry name" value="Translation factors"/>
    <property type="match status" value="1"/>
</dbReference>
<dbReference type="HAMAP" id="MF_01211">
    <property type="entry name" value="DHODB_Fe_S_bind"/>
    <property type="match status" value="1"/>
</dbReference>
<dbReference type="InterPro" id="IPR012165">
    <property type="entry name" value="Cyt_c3_hydrogenase_gsu"/>
</dbReference>
<dbReference type="InterPro" id="IPR037117">
    <property type="entry name" value="Dihydroorotate_DH_ele_sf"/>
</dbReference>
<dbReference type="InterPro" id="IPR019480">
    <property type="entry name" value="Dihydroorotate_DH_Fe-S-bd"/>
</dbReference>
<dbReference type="InterPro" id="IPR023455">
    <property type="entry name" value="Dihydroorotate_DHASE_ETsu"/>
</dbReference>
<dbReference type="InterPro" id="IPR017927">
    <property type="entry name" value="FAD-bd_FR_type"/>
</dbReference>
<dbReference type="InterPro" id="IPR039261">
    <property type="entry name" value="FNR_nucleotide-bd"/>
</dbReference>
<dbReference type="InterPro" id="IPR001433">
    <property type="entry name" value="OxRdtase_FAD/NAD-bd"/>
</dbReference>
<dbReference type="InterPro" id="IPR050353">
    <property type="entry name" value="PyrK_electron_transfer"/>
</dbReference>
<dbReference type="InterPro" id="IPR017938">
    <property type="entry name" value="Riboflavin_synthase-like_b-brl"/>
</dbReference>
<dbReference type="NCBIfam" id="NF000797">
    <property type="entry name" value="PRK00054.1-2"/>
    <property type="match status" value="1"/>
</dbReference>
<dbReference type="NCBIfam" id="NF000799">
    <property type="entry name" value="PRK00054.1-4"/>
    <property type="match status" value="1"/>
</dbReference>
<dbReference type="PANTHER" id="PTHR43513">
    <property type="entry name" value="DIHYDROOROTATE DEHYDROGENASE B (NAD(+)), ELECTRON TRANSFER SUBUNIT"/>
    <property type="match status" value="1"/>
</dbReference>
<dbReference type="PANTHER" id="PTHR43513:SF3">
    <property type="entry name" value="DIHYDROOROTATE DEHYDROGENASE B (NAD(+)), ELECTRON TRANSFER SUBUNIT-RELATED"/>
    <property type="match status" value="1"/>
</dbReference>
<dbReference type="Pfam" id="PF10418">
    <property type="entry name" value="DHODB_Fe-S_bind"/>
    <property type="match status" value="1"/>
</dbReference>
<dbReference type="Pfam" id="PF00175">
    <property type="entry name" value="NAD_binding_1"/>
    <property type="match status" value="1"/>
</dbReference>
<dbReference type="PIRSF" id="PIRSF006816">
    <property type="entry name" value="Cyc3_hyd_g"/>
    <property type="match status" value="1"/>
</dbReference>
<dbReference type="SUPFAM" id="SSF52343">
    <property type="entry name" value="Ferredoxin reductase-like, C-terminal NADP-linked domain"/>
    <property type="match status" value="1"/>
</dbReference>
<dbReference type="SUPFAM" id="SSF63380">
    <property type="entry name" value="Riboflavin synthase domain-like"/>
    <property type="match status" value="1"/>
</dbReference>
<dbReference type="PROSITE" id="PS51384">
    <property type="entry name" value="FAD_FR"/>
    <property type="match status" value="1"/>
</dbReference>
<sequence length="254" mass="27658">MLQTEMKVIQQTEIADKVYELILSGECVADMSPGQFLMLKPSRSDLLMRRPISICSYDKTAKTCILLYRVEGDGTKDFSSLSKGDSIDVLGPLGKGFDLNTIPAPKTALLIGGGIGVPPMYQLGKELADKGVQVTFVNGFQSEKDSFYEKEMTEYGTVHIATVDGSYGTQGFVTDITKNFPEEPDVIYSCGPKAMLQAVKASFPETKTYLSLEERMACGIGACYACVCPKAGDTKKQFKVCEDGPVFRADEVSL</sequence>